<name>DER_MYCPA</name>
<sequence>MTHDGTWSDESDWEAVEFELDEAAHAPPAPVVAVVGRPNVGKSTLVNRILGRREAVVQDVPGVTRDRVSYDALWTGRRFVVQDTGGWEPDAKGLQQLVAEQASVAMRTADAVILVVDALVGATTADEAAARILLRSGKPVFLAANKVDSDKAEADAAMLWSLGLGEPHPISAMHGRGVADLLDEVLAALPEVSEVAPRPGGPRRVALVGKPNVGKSSLLNKLAGDQRSVVHDVAGTTVDPVDSLIELGDRVWRFVDTAGLRRKVGQASGHEFYASVRTHSAIDAAEVVIVLIDASAPLTEQDQRVLSMVIEAGRALVLAFNKWDLVDEDRRELLEREIDRELVQLRWAQRVNISAKTGRAVAKLVPAMETALASWDTRIATGPLNSWLKEVVAATPPPVRGGKQPRILFATQAAARPPTFVLFTTGFLEAGYRRFLERRLREAFGFEGTPIRINVRVREKRGARRR</sequence>
<reference key="1">
    <citation type="journal article" date="2005" name="Proc. Natl. Acad. Sci. U.S.A.">
        <title>The complete genome sequence of Mycobacterium avium subspecies paratuberculosis.</title>
        <authorList>
            <person name="Li L."/>
            <person name="Bannantine J.P."/>
            <person name="Zhang Q."/>
            <person name="Amonsin A."/>
            <person name="May B.J."/>
            <person name="Alt D."/>
            <person name="Banerji N."/>
            <person name="Kanjilal S."/>
            <person name="Kapur V."/>
        </authorList>
    </citation>
    <scope>NUCLEOTIDE SEQUENCE [LARGE SCALE GENOMIC DNA]</scope>
    <source>
        <strain>ATCC BAA-968 / K-10</strain>
    </source>
</reference>
<organism>
    <name type="scientific">Mycolicibacterium paratuberculosis (strain ATCC BAA-968 / K-10)</name>
    <name type="common">Mycobacterium paratuberculosis</name>
    <dbReference type="NCBI Taxonomy" id="262316"/>
    <lineage>
        <taxon>Bacteria</taxon>
        <taxon>Bacillati</taxon>
        <taxon>Actinomycetota</taxon>
        <taxon>Actinomycetes</taxon>
        <taxon>Mycobacteriales</taxon>
        <taxon>Mycobacteriaceae</taxon>
        <taxon>Mycobacterium</taxon>
        <taxon>Mycobacterium avium complex (MAC)</taxon>
    </lineage>
</organism>
<comment type="function">
    <text evidence="1">GTPase that plays an essential role in the late steps of ribosome biogenesis.</text>
</comment>
<comment type="subunit">
    <text evidence="1">Associates with the 50S ribosomal subunit.</text>
</comment>
<comment type="similarity">
    <text evidence="1">Belongs to the TRAFAC class TrmE-Era-EngA-EngB-Septin-like GTPase superfamily. EngA (Der) GTPase family.</text>
</comment>
<keyword id="KW-0342">GTP-binding</keyword>
<keyword id="KW-0547">Nucleotide-binding</keyword>
<keyword id="KW-1185">Reference proteome</keyword>
<keyword id="KW-0677">Repeat</keyword>
<keyword id="KW-0690">Ribosome biogenesis</keyword>
<gene>
    <name evidence="1" type="primary">der</name>
    <name type="synonym">engA</name>
    <name type="ordered locus">MAP_1415</name>
</gene>
<feature type="chain" id="PRO_1000011671" description="GTPase Der">
    <location>
        <begin position="1"/>
        <end position="466"/>
    </location>
</feature>
<feature type="domain" description="EngA-type G 1">
    <location>
        <begin position="30"/>
        <end position="193"/>
    </location>
</feature>
<feature type="domain" description="EngA-type G 2">
    <location>
        <begin position="203"/>
        <end position="376"/>
    </location>
</feature>
<feature type="domain" description="KH-like" evidence="1">
    <location>
        <begin position="377"/>
        <end position="459"/>
    </location>
</feature>
<feature type="binding site" evidence="1">
    <location>
        <begin position="36"/>
        <end position="43"/>
    </location>
    <ligand>
        <name>GTP</name>
        <dbReference type="ChEBI" id="CHEBI:37565"/>
        <label>1</label>
    </ligand>
</feature>
<feature type="binding site" evidence="1">
    <location>
        <begin position="83"/>
        <end position="87"/>
    </location>
    <ligand>
        <name>GTP</name>
        <dbReference type="ChEBI" id="CHEBI:37565"/>
        <label>1</label>
    </ligand>
</feature>
<feature type="binding site" evidence="1">
    <location>
        <begin position="145"/>
        <end position="148"/>
    </location>
    <ligand>
        <name>GTP</name>
        <dbReference type="ChEBI" id="CHEBI:37565"/>
        <label>1</label>
    </ligand>
</feature>
<feature type="binding site" evidence="1">
    <location>
        <begin position="209"/>
        <end position="216"/>
    </location>
    <ligand>
        <name>GTP</name>
        <dbReference type="ChEBI" id="CHEBI:37565"/>
        <label>2</label>
    </ligand>
</feature>
<feature type="binding site" evidence="1">
    <location>
        <begin position="256"/>
        <end position="260"/>
    </location>
    <ligand>
        <name>GTP</name>
        <dbReference type="ChEBI" id="CHEBI:37565"/>
        <label>2</label>
    </ligand>
</feature>
<feature type="binding site" evidence="1">
    <location>
        <begin position="321"/>
        <end position="324"/>
    </location>
    <ligand>
        <name>GTP</name>
        <dbReference type="ChEBI" id="CHEBI:37565"/>
        <label>2</label>
    </ligand>
</feature>
<evidence type="ECO:0000255" key="1">
    <source>
        <dbReference type="HAMAP-Rule" id="MF_00195"/>
    </source>
</evidence>
<protein>
    <recommendedName>
        <fullName evidence="1">GTPase Der</fullName>
    </recommendedName>
    <alternativeName>
        <fullName evidence="1">GTP-binding protein EngA</fullName>
    </alternativeName>
</protein>
<proteinExistence type="inferred from homology"/>
<dbReference type="EMBL" id="AE016958">
    <property type="protein sequence ID" value="AAS03732.1"/>
    <property type="molecule type" value="Genomic_DNA"/>
</dbReference>
<dbReference type="RefSeq" id="WP_003877804.1">
    <property type="nucleotide sequence ID" value="NZ_CP106873.1"/>
</dbReference>
<dbReference type="SMR" id="Q740D6"/>
<dbReference type="STRING" id="262316.MAP_1415"/>
<dbReference type="KEGG" id="mpa:MAP_1415"/>
<dbReference type="PATRIC" id="fig|262316.17.peg.1489"/>
<dbReference type="eggNOG" id="COG1160">
    <property type="taxonomic scope" value="Bacteria"/>
</dbReference>
<dbReference type="HOGENOM" id="CLU_016077_6_2_11"/>
<dbReference type="Proteomes" id="UP000000580">
    <property type="component" value="Chromosome"/>
</dbReference>
<dbReference type="GO" id="GO:0016887">
    <property type="term" value="F:ATP hydrolysis activity"/>
    <property type="evidence" value="ECO:0007669"/>
    <property type="project" value="InterPro"/>
</dbReference>
<dbReference type="GO" id="GO:0005525">
    <property type="term" value="F:GTP binding"/>
    <property type="evidence" value="ECO:0007669"/>
    <property type="project" value="UniProtKB-UniRule"/>
</dbReference>
<dbReference type="GO" id="GO:0043022">
    <property type="term" value="F:ribosome binding"/>
    <property type="evidence" value="ECO:0007669"/>
    <property type="project" value="TreeGrafter"/>
</dbReference>
<dbReference type="GO" id="GO:0042254">
    <property type="term" value="P:ribosome biogenesis"/>
    <property type="evidence" value="ECO:0007669"/>
    <property type="project" value="UniProtKB-KW"/>
</dbReference>
<dbReference type="CDD" id="cd01894">
    <property type="entry name" value="EngA1"/>
    <property type="match status" value="1"/>
</dbReference>
<dbReference type="CDD" id="cd01895">
    <property type="entry name" value="EngA2"/>
    <property type="match status" value="1"/>
</dbReference>
<dbReference type="FunFam" id="3.30.300.20:FF:000004">
    <property type="entry name" value="GTPase Der"/>
    <property type="match status" value="1"/>
</dbReference>
<dbReference type="FunFam" id="3.40.50.300:FF:000040">
    <property type="entry name" value="GTPase Der"/>
    <property type="match status" value="1"/>
</dbReference>
<dbReference type="FunFam" id="3.40.50.300:FF:000057">
    <property type="entry name" value="GTPase Der"/>
    <property type="match status" value="1"/>
</dbReference>
<dbReference type="Gene3D" id="3.30.300.20">
    <property type="match status" value="1"/>
</dbReference>
<dbReference type="Gene3D" id="3.40.50.300">
    <property type="entry name" value="P-loop containing nucleotide triphosphate hydrolases"/>
    <property type="match status" value="2"/>
</dbReference>
<dbReference type="HAMAP" id="MF_00195">
    <property type="entry name" value="GTPase_Der"/>
    <property type="match status" value="1"/>
</dbReference>
<dbReference type="InterPro" id="IPR003593">
    <property type="entry name" value="AAA+_ATPase"/>
</dbReference>
<dbReference type="InterPro" id="IPR031166">
    <property type="entry name" value="G_ENGA"/>
</dbReference>
<dbReference type="InterPro" id="IPR006073">
    <property type="entry name" value="GTP-bd"/>
</dbReference>
<dbReference type="InterPro" id="IPR016484">
    <property type="entry name" value="GTPase_Der"/>
</dbReference>
<dbReference type="InterPro" id="IPR032859">
    <property type="entry name" value="KH_dom-like"/>
</dbReference>
<dbReference type="InterPro" id="IPR015946">
    <property type="entry name" value="KH_dom-like_a/b"/>
</dbReference>
<dbReference type="InterPro" id="IPR027417">
    <property type="entry name" value="P-loop_NTPase"/>
</dbReference>
<dbReference type="InterPro" id="IPR005225">
    <property type="entry name" value="Small_GTP-bd"/>
</dbReference>
<dbReference type="NCBIfam" id="TIGR03594">
    <property type="entry name" value="GTPase_EngA"/>
    <property type="match status" value="1"/>
</dbReference>
<dbReference type="NCBIfam" id="NF002828">
    <property type="entry name" value="PRK03003.1"/>
    <property type="match status" value="1"/>
</dbReference>
<dbReference type="NCBIfam" id="TIGR00231">
    <property type="entry name" value="small_GTP"/>
    <property type="match status" value="2"/>
</dbReference>
<dbReference type="PANTHER" id="PTHR43834">
    <property type="entry name" value="GTPASE DER"/>
    <property type="match status" value="1"/>
</dbReference>
<dbReference type="PANTHER" id="PTHR43834:SF6">
    <property type="entry name" value="GTPASE DER"/>
    <property type="match status" value="1"/>
</dbReference>
<dbReference type="Pfam" id="PF14714">
    <property type="entry name" value="KH_dom-like"/>
    <property type="match status" value="1"/>
</dbReference>
<dbReference type="Pfam" id="PF01926">
    <property type="entry name" value="MMR_HSR1"/>
    <property type="match status" value="2"/>
</dbReference>
<dbReference type="PIRSF" id="PIRSF006485">
    <property type="entry name" value="GTP-binding_EngA"/>
    <property type="match status" value="1"/>
</dbReference>
<dbReference type="PRINTS" id="PR00326">
    <property type="entry name" value="GTP1OBG"/>
</dbReference>
<dbReference type="SMART" id="SM00382">
    <property type="entry name" value="AAA"/>
    <property type="match status" value="2"/>
</dbReference>
<dbReference type="SUPFAM" id="SSF52540">
    <property type="entry name" value="P-loop containing nucleoside triphosphate hydrolases"/>
    <property type="match status" value="2"/>
</dbReference>
<dbReference type="PROSITE" id="PS51712">
    <property type="entry name" value="G_ENGA"/>
    <property type="match status" value="2"/>
</dbReference>
<accession>Q740D6</accession>